<reference key="1">
    <citation type="journal article" date="2009" name="PLoS Genet.">
        <title>Organised genome dynamics in the Escherichia coli species results in highly diverse adaptive paths.</title>
        <authorList>
            <person name="Touchon M."/>
            <person name="Hoede C."/>
            <person name="Tenaillon O."/>
            <person name="Barbe V."/>
            <person name="Baeriswyl S."/>
            <person name="Bidet P."/>
            <person name="Bingen E."/>
            <person name="Bonacorsi S."/>
            <person name="Bouchier C."/>
            <person name="Bouvet O."/>
            <person name="Calteau A."/>
            <person name="Chiapello H."/>
            <person name="Clermont O."/>
            <person name="Cruveiller S."/>
            <person name="Danchin A."/>
            <person name="Diard M."/>
            <person name="Dossat C."/>
            <person name="Karoui M.E."/>
            <person name="Frapy E."/>
            <person name="Garry L."/>
            <person name="Ghigo J.M."/>
            <person name="Gilles A.M."/>
            <person name="Johnson J."/>
            <person name="Le Bouguenec C."/>
            <person name="Lescat M."/>
            <person name="Mangenot S."/>
            <person name="Martinez-Jehanne V."/>
            <person name="Matic I."/>
            <person name="Nassif X."/>
            <person name="Oztas S."/>
            <person name="Petit M.A."/>
            <person name="Pichon C."/>
            <person name="Rouy Z."/>
            <person name="Ruf C.S."/>
            <person name="Schneider D."/>
            <person name="Tourret J."/>
            <person name="Vacherie B."/>
            <person name="Vallenet D."/>
            <person name="Medigue C."/>
            <person name="Rocha E.P.C."/>
            <person name="Denamur E."/>
        </authorList>
    </citation>
    <scope>NUCLEOTIDE SEQUENCE [LARGE SCALE GENOMIC DNA]</scope>
    <source>
        <strain>55989 / EAEC</strain>
    </source>
</reference>
<protein>
    <recommendedName>
        <fullName evidence="1">2-dehydro-3-deoxyphosphooctonate aldolase</fullName>
        <ecNumber evidence="1">2.5.1.55</ecNumber>
    </recommendedName>
    <alternativeName>
        <fullName evidence="1">3-deoxy-D-manno-octulosonic acid 8-phosphate synthase</fullName>
    </alternativeName>
    <alternativeName>
        <fullName evidence="1">KDO-8-phosphate synthase</fullName>
        <shortName evidence="1">KDO 8-P synthase</shortName>
        <shortName evidence="1">KDOPS</shortName>
    </alternativeName>
    <alternativeName>
        <fullName evidence="1">Phospho-2-dehydro-3-deoxyoctonate aldolase</fullName>
    </alternativeName>
</protein>
<organism>
    <name type="scientific">Escherichia coli (strain 55989 / EAEC)</name>
    <dbReference type="NCBI Taxonomy" id="585055"/>
    <lineage>
        <taxon>Bacteria</taxon>
        <taxon>Pseudomonadati</taxon>
        <taxon>Pseudomonadota</taxon>
        <taxon>Gammaproteobacteria</taxon>
        <taxon>Enterobacterales</taxon>
        <taxon>Enterobacteriaceae</taxon>
        <taxon>Escherichia</taxon>
    </lineage>
</organism>
<keyword id="KW-0963">Cytoplasm</keyword>
<keyword id="KW-0448">Lipopolysaccharide biosynthesis</keyword>
<keyword id="KW-1185">Reference proteome</keyword>
<keyword id="KW-0808">Transferase</keyword>
<accession>B7LGX6</accession>
<proteinExistence type="inferred from homology"/>
<comment type="catalytic activity">
    <reaction evidence="1">
        <text>D-arabinose 5-phosphate + phosphoenolpyruvate + H2O = 3-deoxy-alpha-D-manno-2-octulosonate-8-phosphate + phosphate</text>
        <dbReference type="Rhea" id="RHEA:14053"/>
        <dbReference type="ChEBI" id="CHEBI:15377"/>
        <dbReference type="ChEBI" id="CHEBI:43474"/>
        <dbReference type="ChEBI" id="CHEBI:57693"/>
        <dbReference type="ChEBI" id="CHEBI:58702"/>
        <dbReference type="ChEBI" id="CHEBI:85985"/>
        <dbReference type="EC" id="2.5.1.55"/>
    </reaction>
</comment>
<comment type="pathway">
    <text evidence="1">Carbohydrate biosynthesis; 3-deoxy-D-manno-octulosonate biosynthesis; 3-deoxy-D-manno-octulosonate from D-ribulose 5-phosphate: step 2/3.</text>
</comment>
<comment type="pathway">
    <text evidence="1">Bacterial outer membrane biogenesis; lipopolysaccharide biosynthesis.</text>
</comment>
<comment type="subcellular location">
    <subcellularLocation>
        <location evidence="1">Cytoplasm</location>
    </subcellularLocation>
</comment>
<comment type="similarity">
    <text evidence="1">Belongs to the KdsA family.</text>
</comment>
<gene>
    <name evidence="1" type="primary">kdsA</name>
    <name type="ordered locus">EC55989_1311</name>
</gene>
<sequence length="284" mass="30833">MKQKVVSIGDINVANDLPFVLFGGMNVLESRDLAMRICEHYVTVTQKLGIPYVFKASFDKANRSSIHSYRGPGLEEGMKIFQELKQTFGVKIITDVHEPSQAQPVADVVDVIQLPAFLARQTDLVEAMAKTGAVINVKKPQFVSPGQMGNIVDKFKEGGNEKVILCDRGANFGYDNLVVDMLGFSIMKKVSGNSPVIFDVTHALQCRDPFGAASGGRRAQVAELARAGMAVGLAGLFIEAHPDPEHAKCDGPSALPLAKLEPFLKQMKAIDDLVKGFEELDTSK</sequence>
<feature type="chain" id="PRO_1000117777" description="2-dehydro-3-deoxyphosphooctonate aldolase">
    <location>
        <begin position="1"/>
        <end position="284"/>
    </location>
</feature>
<dbReference type="EC" id="2.5.1.55" evidence="1"/>
<dbReference type="EMBL" id="CU928145">
    <property type="protein sequence ID" value="CAU97169.1"/>
    <property type="molecule type" value="Genomic_DNA"/>
</dbReference>
<dbReference type="RefSeq" id="WP_000811065.1">
    <property type="nucleotide sequence ID" value="NZ_CP028304.1"/>
</dbReference>
<dbReference type="SMR" id="B7LGX6"/>
<dbReference type="GeneID" id="75203328"/>
<dbReference type="KEGG" id="eck:EC55989_1311"/>
<dbReference type="HOGENOM" id="CLU_036666_0_0_6"/>
<dbReference type="UniPathway" id="UPA00030"/>
<dbReference type="UniPathway" id="UPA00357">
    <property type="reaction ID" value="UER00474"/>
</dbReference>
<dbReference type="Proteomes" id="UP000000746">
    <property type="component" value="Chromosome"/>
</dbReference>
<dbReference type="GO" id="GO:0005737">
    <property type="term" value="C:cytoplasm"/>
    <property type="evidence" value="ECO:0007669"/>
    <property type="project" value="UniProtKB-SubCell"/>
</dbReference>
<dbReference type="GO" id="GO:0008676">
    <property type="term" value="F:3-deoxy-8-phosphooctulonate synthase activity"/>
    <property type="evidence" value="ECO:0007669"/>
    <property type="project" value="UniProtKB-UniRule"/>
</dbReference>
<dbReference type="GO" id="GO:0019294">
    <property type="term" value="P:keto-3-deoxy-D-manno-octulosonic acid biosynthetic process"/>
    <property type="evidence" value="ECO:0007669"/>
    <property type="project" value="UniProtKB-UniRule"/>
</dbReference>
<dbReference type="FunFam" id="3.20.20.70:FF:000058">
    <property type="entry name" value="2-dehydro-3-deoxyphosphooctonate aldolase"/>
    <property type="match status" value="1"/>
</dbReference>
<dbReference type="Gene3D" id="3.20.20.70">
    <property type="entry name" value="Aldolase class I"/>
    <property type="match status" value="1"/>
</dbReference>
<dbReference type="HAMAP" id="MF_00056">
    <property type="entry name" value="KDO8P_synth"/>
    <property type="match status" value="1"/>
</dbReference>
<dbReference type="InterPro" id="IPR013785">
    <property type="entry name" value="Aldolase_TIM"/>
</dbReference>
<dbReference type="InterPro" id="IPR006218">
    <property type="entry name" value="DAHP1/KDSA"/>
</dbReference>
<dbReference type="InterPro" id="IPR006269">
    <property type="entry name" value="KDO8P_synthase"/>
</dbReference>
<dbReference type="NCBIfam" id="TIGR01362">
    <property type="entry name" value="KDO8P_synth"/>
    <property type="match status" value="1"/>
</dbReference>
<dbReference type="NCBIfam" id="NF003543">
    <property type="entry name" value="PRK05198.1"/>
    <property type="match status" value="1"/>
</dbReference>
<dbReference type="NCBIfam" id="NF009109">
    <property type="entry name" value="PRK12457.1"/>
    <property type="match status" value="1"/>
</dbReference>
<dbReference type="PANTHER" id="PTHR21057">
    <property type="entry name" value="PHOSPHO-2-DEHYDRO-3-DEOXYHEPTONATE ALDOLASE"/>
    <property type="match status" value="1"/>
</dbReference>
<dbReference type="Pfam" id="PF00793">
    <property type="entry name" value="DAHP_synth_1"/>
    <property type="match status" value="1"/>
</dbReference>
<dbReference type="SUPFAM" id="SSF51569">
    <property type="entry name" value="Aldolase"/>
    <property type="match status" value="1"/>
</dbReference>
<name>KDSA_ECO55</name>
<evidence type="ECO:0000255" key="1">
    <source>
        <dbReference type="HAMAP-Rule" id="MF_00056"/>
    </source>
</evidence>